<accession>Q9UJ98</accession>
<accession>A6H8Z1</accession>
<accession>B4DZ10</accession>
<accession>D6W5U8</accession>
<accession>H7BYK9</accession>
<accession>Q8NDP3</accession>
<organism>
    <name type="scientific">Homo sapiens</name>
    <name type="common">Human</name>
    <dbReference type="NCBI Taxonomy" id="9606"/>
    <lineage>
        <taxon>Eukaryota</taxon>
        <taxon>Metazoa</taxon>
        <taxon>Chordata</taxon>
        <taxon>Craniata</taxon>
        <taxon>Vertebrata</taxon>
        <taxon>Euteleostomi</taxon>
        <taxon>Mammalia</taxon>
        <taxon>Eutheria</taxon>
        <taxon>Euarchontoglires</taxon>
        <taxon>Primates</taxon>
        <taxon>Haplorrhini</taxon>
        <taxon>Catarrhini</taxon>
        <taxon>Hominidae</taxon>
        <taxon>Homo</taxon>
    </lineage>
</organism>
<sequence length="1225" mass="139034">MSSPLQRAVGDTKRALSASSSSSASLPFDDRDSNHTSEGNGDSLLADEDTDFEDSLNRNVKKRAAKRPPKTTPVAKHPKKGSRVVHRHSRKQSEPPANDLFNAVKAAKSDMQSLVDEWLDSYKQDQDAGFLELVNFFIQSCGCKGIVTPEMFKKMSNSEIIQHLTEQFNEDSGDYPLIAPGPSWKKFQGSFCEFVRTLVCQCQYSLLYDGFPMDDLISLLTGLSDSQVRAFRHTSTLAAMKLMTSLVKVALQLSVHQDNNQRQYEAERNKGPGQRAPERLESLLEKRKELQEHQEEIEGMMNALFRGVFVHRYRDVLPEIRAICIEEIGCWMQSYSTSFLTDSYLKYIGWTLHDKHREVRLKCVKALKGLYGNRDLTTRLELFTSRFKDRMVSMVMDREYDVAVEAVRLLILILKNMEGVLTDADCESVYPVVYASHRGLASAAGEFLYWKLFYPECEIRMMGGREQRQSPGAQRTFFQLLLSFFVESELHDHAAYLVDSLWDCAGARLKDWEGLTSLLLEKDQNLGDVQESTLIEILVSSARQASEGHPPVGRVTGRKGLTSKERKTQADDRVKLTEHLIPLLPQLLAKFSADAEKVTPLLQLLSCFDLHIYCTGRLEKHLELFLQQLQEVVVKHAEPAVLEAGAHALYLLCNPEFTFFSRADFARSQLVDLLTDRFQQELEELLQSSFLDEDEVYNLAATLKRLSAFYNTHDLTRWELYEPCCQLLQKAVDTGEVPHQVILPALTLVYFSILWTLTHISKSDASQKQLSSLRDRMVAFCELCQSCLSDVDTEIQEQAFVLLSDLLLIFSPQMIVGGRDFLRPLVFFPEATLQSELASFLMDHVFIQPGDLGSGDSQEDHLQIERLHQRRRLLAGFCKLLLYGVLEMDAASDVFKHYNKFYNDYGDIIKETLTRARQIDRSHCSRILLLSLKQLYTELLQEHGPQGLNELPAFIEMRDLARRFALSFGPQQLQNRDLVVMLHKEGIQFSLSELPPAGSSNQPPNLAFLELLSEFSPRLFHQDKQLLLSYLEKCLQHVSQAPGHPWGPVTTYCHSLSPVENTAETSPQVLPSSKRRRVEGPAKPNREDVSSSQEESLQLNSIPPTPTLTSTAVKSRQPLWGLKEMEEEDGSELDFAQGQPVAGTERSRFLGPQYFQTPHNPSGPGLGNQLMRLSLMEEDEEEELEIQDESNEERQDTDMQASSYSSTSERGLDLLDSTELDIEDF</sequence>
<feature type="chain" id="PRO_0000120188" description="Cohesin subunit SA-3">
    <location>
        <begin position="1"/>
        <end position="1225"/>
    </location>
</feature>
<feature type="domain" description="SCD" evidence="3">
    <location>
        <begin position="309"/>
        <end position="394"/>
    </location>
</feature>
<feature type="region of interest" description="Disordered" evidence="4">
    <location>
        <begin position="1"/>
        <end position="97"/>
    </location>
</feature>
<feature type="region of interest" description="Disordered" evidence="4">
    <location>
        <begin position="546"/>
        <end position="567"/>
    </location>
</feature>
<feature type="region of interest" description="Disordered" evidence="4">
    <location>
        <begin position="1063"/>
        <end position="1113"/>
    </location>
</feature>
<feature type="region of interest" description="Disordered" evidence="4">
    <location>
        <begin position="1177"/>
        <end position="1225"/>
    </location>
</feature>
<feature type="compositionally biased region" description="Low complexity" evidence="4">
    <location>
        <begin position="15"/>
        <end position="26"/>
    </location>
</feature>
<feature type="compositionally biased region" description="Acidic residues" evidence="4">
    <location>
        <begin position="45"/>
        <end position="54"/>
    </location>
</feature>
<feature type="compositionally biased region" description="Basic residues" evidence="4">
    <location>
        <begin position="59"/>
        <end position="69"/>
    </location>
</feature>
<feature type="compositionally biased region" description="Basic residues" evidence="4">
    <location>
        <begin position="76"/>
        <end position="90"/>
    </location>
</feature>
<feature type="compositionally biased region" description="Basic and acidic residues" evidence="4">
    <location>
        <begin position="1078"/>
        <end position="1089"/>
    </location>
</feature>
<feature type="compositionally biased region" description="Low complexity" evidence="4">
    <location>
        <begin position="1090"/>
        <end position="1099"/>
    </location>
</feature>
<feature type="compositionally biased region" description="Acidic residues" evidence="4">
    <location>
        <begin position="1177"/>
        <end position="1191"/>
    </location>
</feature>
<feature type="compositionally biased region" description="Polar residues" evidence="4">
    <location>
        <begin position="1198"/>
        <end position="1209"/>
    </location>
</feature>
<feature type="compositionally biased region" description="Acidic residues" evidence="4">
    <location>
        <begin position="1216"/>
        <end position="1225"/>
    </location>
</feature>
<feature type="modified residue" description="Phosphoserine" evidence="2">
    <location>
        <position position="1203"/>
    </location>
</feature>
<feature type="splice variant" id="VSP_054742" description="In isoform 3." evidence="12">
    <location>
        <begin position="113"/>
        <end position="170"/>
    </location>
</feature>
<feature type="splice variant" id="VSP_006996" description="In isoform 2." evidence="13">
    <location>
        <begin position="171"/>
        <end position="212"/>
    </location>
</feature>
<feature type="splice variant" id="VSP_006997" description="In isoform 2." evidence="13">
    <location>
        <begin position="759"/>
        <end position="1053"/>
    </location>
</feature>
<feature type="sequence variant" id="VAR_086738" description="In POF8 and SPGF61." evidence="9">
    <original>R</original>
    <variation>H</variation>
    <location>
        <position position="321"/>
    </location>
</feature>
<feature type="sequence variant" id="VAR_086739" description="In SPGF61." evidence="8">
    <original>L</original>
    <variation>R</variation>
    <location>
        <position position="421"/>
    </location>
</feature>
<feature type="sequence variant" id="VAR_086740" description="In SPGF61." evidence="8">
    <location>
        <begin position="438"/>
        <end position="1225"/>
    </location>
</feature>
<feature type="sequence variant" id="VAR_086741" description="In POF8." evidence="7">
    <location>
        <begin position="650"/>
        <end position="1225"/>
    </location>
</feature>
<feature type="sequence variant" id="VAR_089850" description="In POF8; uncertain significance." evidence="11">
    <original>G</original>
    <variation>E</variation>
    <location>
        <position position="876"/>
    </location>
</feature>
<feature type="sequence conflict" description="In Ref. 3; BAG63922." evidence="15" ref="3">
    <original>F</original>
    <variation>S</variation>
    <location>
        <position position="309"/>
    </location>
</feature>
<feature type="sequence conflict" description="In Ref. 1; CAB59367." evidence="15" ref="1">
    <original>L</original>
    <variation>V</variation>
    <location>
        <position position="361"/>
    </location>
</feature>
<feature type="sequence conflict" description="In Ref. 1; CAB59367." evidence="15" ref="1">
    <original>T</original>
    <variation>A</variation>
    <location>
        <position position="378"/>
    </location>
</feature>
<feature type="sequence conflict" description="In Ref. 1; CAB59367." evidence="15" ref="1">
    <original>V</original>
    <variation>I</variation>
    <location>
        <position position="395"/>
    </location>
</feature>
<feature type="sequence conflict" description="In Ref. 1; CAB59367." evidence="15" ref="1">
    <original>D</original>
    <variation>S</variation>
    <location>
        <position position="401"/>
    </location>
</feature>
<feature type="sequence conflict" description="In Ref. 1; CAB59367." evidence="15" ref="1">
    <original>V</original>
    <variation>L</variation>
    <location>
        <position position="420"/>
    </location>
</feature>
<feature type="sequence conflict" description="In Ref. 1; CAB59367." evidence="15" ref="1">
    <original>ASH</original>
    <variation>PSN</variation>
    <location>
        <begin position="435"/>
        <end position="437"/>
    </location>
</feature>
<feature type="sequence conflict" description="In Ref. 3; BAG63922." evidence="15" ref="3">
    <original>C</original>
    <variation>Y</variation>
    <location>
        <position position="457"/>
    </location>
</feature>
<feature type="sequence conflict" description="In Ref. 1; CAB59367." evidence="15" ref="1">
    <original>M</original>
    <variation>T</variation>
    <location>
        <position position="461"/>
    </location>
</feature>
<feature type="sequence conflict" description="In Ref. 3; BAG63922." evidence="15" ref="3">
    <original>S</original>
    <variation>W</variation>
    <location>
        <position position="771"/>
    </location>
</feature>
<feature type="sequence conflict" description="In Ref. 1; CAB59367." evidence="15" ref="1">
    <original>R</original>
    <variation>K</variation>
    <location>
        <position position="1076"/>
    </location>
</feature>
<feature type="sequence conflict" description="In Ref. 2; CAD38679." evidence="15" ref="2">
    <original>G</original>
    <variation>GS</variation>
    <location>
        <position position="1138"/>
    </location>
</feature>
<reference key="1">
    <citation type="journal article" date="2000" name="FASEB J.">
        <title>STAG3, a novel gene encoding a protein involved in meiotic chromosome pairing and location of STAG3-related genes flanking the Williams-Beuren syndrome deletion.</title>
        <authorList>
            <person name="Pezzi N."/>
            <person name="Prieto I."/>
            <person name="Kremer L."/>
            <person name="Perez Jurado L.A."/>
            <person name="Valero C."/>
            <person name="Del Mazo J."/>
            <person name="Martinez-A C."/>
            <person name="Barbero J.L."/>
        </authorList>
    </citation>
    <scope>NUCLEOTIDE SEQUENCE [MRNA] (ISOFORM 1)</scope>
    <scope>CHARACTERIZATION</scope>
    <source>
        <tissue>Testis</tissue>
    </source>
</reference>
<reference key="2">
    <citation type="journal article" date="2007" name="BMC Genomics">
        <title>The full-ORF clone resource of the German cDNA consortium.</title>
        <authorList>
            <person name="Bechtel S."/>
            <person name="Rosenfelder H."/>
            <person name="Duda A."/>
            <person name="Schmidt C.P."/>
            <person name="Ernst U."/>
            <person name="Wellenreuther R."/>
            <person name="Mehrle A."/>
            <person name="Schuster C."/>
            <person name="Bahr A."/>
            <person name="Bloecker H."/>
            <person name="Heubner D."/>
            <person name="Hoerlein A."/>
            <person name="Michel G."/>
            <person name="Wedler H."/>
            <person name="Koehrer K."/>
            <person name="Ottenwaelder B."/>
            <person name="Poustka A."/>
            <person name="Wiemann S."/>
            <person name="Schupp I."/>
        </authorList>
    </citation>
    <scope>NUCLEOTIDE SEQUENCE [LARGE SCALE MRNA] (ISOFORM 2)</scope>
    <source>
        <tissue>Testis</tissue>
    </source>
</reference>
<reference key="3">
    <citation type="journal article" date="2004" name="Nat. Genet.">
        <title>Complete sequencing and characterization of 21,243 full-length human cDNAs.</title>
        <authorList>
            <person name="Ota T."/>
            <person name="Suzuki Y."/>
            <person name="Nishikawa T."/>
            <person name="Otsuki T."/>
            <person name="Sugiyama T."/>
            <person name="Irie R."/>
            <person name="Wakamatsu A."/>
            <person name="Hayashi K."/>
            <person name="Sato H."/>
            <person name="Nagai K."/>
            <person name="Kimura K."/>
            <person name="Makita H."/>
            <person name="Sekine M."/>
            <person name="Obayashi M."/>
            <person name="Nishi T."/>
            <person name="Shibahara T."/>
            <person name="Tanaka T."/>
            <person name="Ishii S."/>
            <person name="Yamamoto J."/>
            <person name="Saito K."/>
            <person name="Kawai Y."/>
            <person name="Isono Y."/>
            <person name="Nakamura Y."/>
            <person name="Nagahari K."/>
            <person name="Murakami K."/>
            <person name="Yasuda T."/>
            <person name="Iwayanagi T."/>
            <person name="Wagatsuma M."/>
            <person name="Shiratori A."/>
            <person name="Sudo H."/>
            <person name="Hosoiri T."/>
            <person name="Kaku Y."/>
            <person name="Kodaira H."/>
            <person name="Kondo H."/>
            <person name="Sugawara M."/>
            <person name="Takahashi M."/>
            <person name="Kanda K."/>
            <person name="Yokoi T."/>
            <person name="Furuya T."/>
            <person name="Kikkawa E."/>
            <person name="Omura Y."/>
            <person name="Abe K."/>
            <person name="Kamihara K."/>
            <person name="Katsuta N."/>
            <person name="Sato K."/>
            <person name="Tanikawa M."/>
            <person name="Yamazaki M."/>
            <person name="Ninomiya K."/>
            <person name="Ishibashi T."/>
            <person name="Yamashita H."/>
            <person name="Murakawa K."/>
            <person name="Fujimori K."/>
            <person name="Tanai H."/>
            <person name="Kimata M."/>
            <person name="Watanabe M."/>
            <person name="Hiraoka S."/>
            <person name="Chiba Y."/>
            <person name="Ishida S."/>
            <person name="Ono Y."/>
            <person name="Takiguchi S."/>
            <person name="Watanabe S."/>
            <person name="Yosida M."/>
            <person name="Hotuta T."/>
            <person name="Kusano J."/>
            <person name="Kanehori K."/>
            <person name="Takahashi-Fujii A."/>
            <person name="Hara H."/>
            <person name="Tanase T.-O."/>
            <person name="Nomura Y."/>
            <person name="Togiya S."/>
            <person name="Komai F."/>
            <person name="Hara R."/>
            <person name="Takeuchi K."/>
            <person name="Arita M."/>
            <person name="Imose N."/>
            <person name="Musashino K."/>
            <person name="Yuuki H."/>
            <person name="Oshima A."/>
            <person name="Sasaki N."/>
            <person name="Aotsuka S."/>
            <person name="Yoshikawa Y."/>
            <person name="Matsunawa H."/>
            <person name="Ichihara T."/>
            <person name="Shiohata N."/>
            <person name="Sano S."/>
            <person name="Moriya S."/>
            <person name="Momiyama H."/>
            <person name="Satoh N."/>
            <person name="Takami S."/>
            <person name="Terashima Y."/>
            <person name="Suzuki O."/>
            <person name="Nakagawa S."/>
            <person name="Senoh A."/>
            <person name="Mizoguchi H."/>
            <person name="Goto Y."/>
            <person name="Shimizu F."/>
            <person name="Wakebe H."/>
            <person name="Hishigaki H."/>
            <person name="Watanabe T."/>
            <person name="Sugiyama A."/>
            <person name="Takemoto M."/>
            <person name="Kawakami B."/>
            <person name="Yamazaki M."/>
            <person name="Watanabe K."/>
            <person name="Kumagai A."/>
            <person name="Itakura S."/>
            <person name="Fukuzumi Y."/>
            <person name="Fujimori Y."/>
            <person name="Komiyama M."/>
            <person name="Tashiro H."/>
            <person name="Tanigami A."/>
            <person name="Fujiwara T."/>
            <person name="Ono T."/>
            <person name="Yamada K."/>
            <person name="Fujii Y."/>
            <person name="Ozaki K."/>
            <person name="Hirao M."/>
            <person name="Ohmori Y."/>
            <person name="Kawabata A."/>
            <person name="Hikiji T."/>
            <person name="Kobatake N."/>
            <person name="Inagaki H."/>
            <person name="Ikema Y."/>
            <person name="Okamoto S."/>
            <person name="Okitani R."/>
            <person name="Kawakami T."/>
            <person name="Noguchi S."/>
            <person name="Itoh T."/>
            <person name="Shigeta K."/>
            <person name="Senba T."/>
            <person name="Matsumura K."/>
            <person name="Nakajima Y."/>
            <person name="Mizuno T."/>
            <person name="Morinaga M."/>
            <person name="Sasaki M."/>
            <person name="Togashi T."/>
            <person name="Oyama M."/>
            <person name="Hata H."/>
            <person name="Watanabe M."/>
            <person name="Komatsu T."/>
            <person name="Mizushima-Sugano J."/>
            <person name="Satoh T."/>
            <person name="Shirai Y."/>
            <person name="Takahashi Y."/>
            <person name="Nakagawa K."/>
            <person name="Okumura K."/>
            <person name="Nagase T."/>
            <person name="Nomura N."/>
            <person name="Kikuchi H."/>
            <person name="Masuho Y."/>
            <person name="Yamashita R."/>
            <person name="Nakai K."/>
            <person name="Yada T."/>
            <person name="Nakamura Y."/>
            <person name="Ohara O."/>
            <person name="Isogai T."/>
            <person name="Sugano S."/>
        </authorList>
    </citation>
    <scope>NUCLEOTIDE SEQUENCE [LARGE SCALE MRNA] (ISOFORM 3)</scope>
    <source>
        <tissue>Testis</tissue>
    </source>
</reference>
<reference key="4">
    <citation type="journal article" date="2003" name="Nature">
        <title>The DNA sequence of human chromosome 7.</title>
        <authorList>
            <person name="Hillier L.W."/>
            <person name="Fulton R.S."/>
            <person name="Fulton L.A."/>
            <person name="Graves T.A."/>
            <person name="Pepin K.H."/>
            <person name="Wagner-McPherson C."/>
            <person name="Layman D."/>
            <person name="Maas J."/>
            <person name="Jaeger S."/>
            <person name="Walker R."/>
            <person name="Wylie K."/>
            <person name="Sekhon M."/>
            <person name="Becker M.C."/>
            <person name="O'Laughlin M.D."/>
            <person name="Schaller M.E."/>
            <person name="Fewell G.A."/>
            <person name="Delehaunty K.D."/>
            <person name="Miner T.L."/>
            <person name="Nash W.E."/>
            <person name="Cordes M."/>
            <person name="Du H."/>
            <person name="Sun H."/>
            <person name="Edwards J."/>
            <person name="Bradshaw-Cordum H."/>
            <person name="Ali J."/>
            <person name="Andrews S."/>
            <person name="Isak A."/>
            <person name="Vanbrunt A."/>
            <person name="Nguyen C."/>
            <person name="Du F."/>
            <person name="Lamar B."/>
            <person name="Courtney L."/>
            <person name="Kalicki J."/>
            <person name="Ozersky P."/>
            <person name="Bielicki L."/>
            <person name="Scott K."/>
            <person name="Holmes A."/>
            <person name="Harkins R."/>
            <person name="Harris A."/>
            <person name="Strong C.M."/>
            <person name="Hou S."/>
            <person name="Tomlinson C."/>
            <person name="Dauphin-Kohlberg S."/>
            <person name="Kozlowicz-Reilly A."/>
            <person name="Leonard S."/>
            <person name="Rohlfing T."/>
            <person name="Rock S.M."/>
            <person name="Tin-Wollam A.-M."/>
            <person name="Abbott A."/>
            <person name="Minx P."/>
            <person name="Maupin R."/>
            <person name="Strowmatt C."/>
            <person name="Latreille P."/>
            <person name="Miller N."/>
            <person name="Johnson D."/>
            <person name="Murray J."/>
            <person name="Woessner J.P."/>
            <person name="Wendl M.C."/>
            <person name="Yang S.-P."/>
            <person name="Schultz B.R."/>
            <person name="Wallis J.W."/>
            <person name="Spieth J."/>
            <person name="Bieri T.A."/>
            <person name="Nelson J.O."/>
            <person name="Berkowicz N."/>
            <person name="Wohldmann P.E."/>
            <person name="Cook L.L."/>
            <person name="Hickenbotham M.T."/>
            <person name="Eldred J."/>
            <person name="Williams D."/>
            <person name="Bedell J.A."/>
            <person name="Mardis E.R."/>
            <person name="Clifton S.W."/>
            <person name="Chissoe S.L."/>
            <person name="Marra M.A."/>
            <person name="Raymond C."/>
            <person name="Haugen E."/>
            <person name="Gillett W."/>
            <person name="Zhou Y."/>
            <person name="James R."/>
            <person name="Phelps K."/>
            <person name="Iadanoto S."/>
            <person name="Bubb K."/>
            <person name="Simms E."/>
            <person name="Levy R."/>
            <person name="Clendenning J."/>
            <person name="Kaul R."/>
            <person name="Kent W.J."/>
            <person name="Furey T.S."/>
            <person name="Baertsch R.A."/>
            <person name="Brent M.R."/>
            <person name="Keibler E."/>
            <person name="Flicek P."/>
            <person name="Bork P."/>
            <person name="Suyama M."/>
            <person name="Bailey J.A."/>
            <person name="Portnoy M.E."/>
            <person name="Torrents D."/>
            <person name="Chinwalla A.T."/>
            <person name="Gish W.R."/>
            <person name="Eddy S.R."/>
            <person name="McPherson J.D."/>
            <person name="Olson M.V."/>
            <person name="Eichler E.E."/>
            <person name="Green E.D."/>
            <person name="Waterston R.H."/>
            <person name="Wilson R.K."/>
        </authorList>
    </citation>
    <scope>NUCLEOTIDE SEQUENCE [LARGE SCALE GENOMIC DNA]</scope>
</reference>
<reference key="5">
    <citation type="submission" date="2005-09" db="EMBL/GenBank/DDBJ databases">
        <authorList>
            <person name="Mural R.J."/>
            <person name="Istrail S."/>
            <person name="Sutton G.G."/>
            <person name="Florea L."/>
            <person name="Halpern A.L."/>
            <person name="Mobarry C.M."/>
            <person name="Lippert R."/>
            <person name="Walenz B."/>
            <person name="Shatkay H."/>
            <person name="Dew I."/>
            <person name="Miller J.R."/>
            <person name="Flanigan M.J."/>
            <person name="Edwards N.J."/>
            <person name="Bolanos R."/>
            <person name="Fasulo D."/>
            <person name="Halldorsson B.V."/>
            <person name="Hannenhalli S."/>
            <person name="Turner R."/>
            <person name="Yooseph S."/>
            <person name="Lu F."/>
            <person name="Nusskern D.R."/>
            <person name="Shue B.C."/>
            <person name="Zheng X.H."/>
            <person name="Zhong F."/>
            <person name="Delcher A.L."/>
            <person name="Huson D.H."/>
            <person name="Kravitz S.A."/>
            <person name="Mouchard L."/>
            <person name="Reinert K."/>
            <person name="Remington K.A."/>
            <person name="Clark A.G."/>
            <person name="Waterman M.S."/>
            <person name="Eichler E.E."/>
            <person name="Adams M.D."/>
            <person name="Hunkapiller M.W."/>
            <person name="Myers E.W."/>
            <person name="Venter J.C."/>
        </authorList>
    </citation>
    <scope>NUCLEOTIDE SEQUENCE [LARGE SCALE GENOMIC DNA]</scope>
</reference>
<reference key="6">
    <citation type="journal article" date="2004" name="Genome Res.">
        <title>The status, quality, and expansion of the NIH full-length cDNA project: the Mammalian Gene Collection (MGC).</title>
        <authorList>
            <consortium name="The MGC Project Team"/>
        </authorList>
    </citation>
    <scope>NUCLEOTIDE SEQUENCE [LARGE SCALE MRNA] (ISOFORM 1)</scope>
</reference>
<reference key="7">
    <citation type="journal article" date="2002" name="EMBO Rep.">
        <title>STAG2 and Rad21 mammalian mitotic cohesins are implicated in meiosis.</title>
        <authorList>
            <person name="Prieto I."/>
            <person name="Pezzi N."/>
            <person name="Buesa J.M."/>
            <person name="Kremer L."/>
            <person name="Barthelemy I."/>
            <person name="Carreiro C."/>
            <person name="Roncal F."/>
            <person name="Martinez A."/>
            <person name="Gomez L."/>
            <person name="Fernandez R."/>
            <person name="Martinez-A C."/>
            <person name="Barbero J.L."/>
        </authorList>
    </citation>
    <scope>SUBCELLULAR LOCATION DURING MEIOSIS</scope>
</reference>
<reference key="8">
    <citation type="journal article" date="2012" name="PLoS ONE">
        <title>Genome-wide linkage in a highly consanguineous pedigree reveals two novel loci on chromosome 7 for non-syndromic familial Premature Ovarian Failure.</title>
        <authorList>
            <person name="Caburet S."/>
            <person name="Zavadakova P."/>
            <person name="Ben-Neriah Z."/>
            <person name="Bouhali K."/>
            <person name="Dipietromaria A."/>
            <person name="Charon C."/>
            <person name="Besse C."/>
            <person name="Laissue P."/>
            <person name="Chalifa-Caspi V."/>
            <person name="Christin-Maitre S."/>
            <person name="Vaiman D."/>
            <person name="Levi G."/>
            <person name="Veitia R.A."/>
            <person name="Fellous M."/>
        </authorList>
    </citation>
    <scope>POSSIBLE INVOLVEMENT IN POF8</scope>
</reference>
<reference key="9">
    <citation type="journal article" date="2014" name="N. Engl. J. Med.">
        <title>Mutant cohesin in premature ovarian failure.</title>
        <authorList>
            <person name="Caburet S."/>
            <person name="Arboleda V.A."/>
            <person name="Llano E."/>
            <person name="Overbeek P.A."/>
            <person name="Barbero J.L."/>
            <person name="Oka K."/>
            <person name="Harrison W."/>
            <person name="Vaiman D."/>
            <person name="Ben-Neriah Z."/>
            <person name="Garcia-Tunon I."/>
            <person name="Fellous M."/>
            <person name="Pendas A.M."/>
            <person name="Veitia R.A."/>
            <person name="Vilain E."/>
        </authorList>
    </citation>
    <scope>INVOLVEMENT IN POF8</scope>
</reference>
<reference key="10">
    <citation type="journal article" date="2019" name="Hum. Reprod.">
        <title>Mutations in the stromal antigen 3 (STAG3) gene cause male infertility due to meiotic arrest.</title>
        <authorList>
            <person name="van der Bijl N."/>
            <person name="Roepke A."/>
            <person name="Biswas U."/>
            <person name="Woeste M."/>
            <person name="Jessberger R."/>
            <person name="Kliesch S."/>
            <person name="Friedrich C."/>
            <person name="Tuettelmann F."/>
        </authorList>
    </citation>
    <scope>INVOLVEMENT IN SPGF61</scope>
    <scope>VARIANTS SPGF61 ARG-421 AND 438-ARG--PHE-1225 DEL</scope>
    <scope>FUNCTION</scope>
</reference>
<reference key="11">
    <citation type="journal article" date="2019" name="Eur. J. Med. Genet.">
        <title>Two rare loss-of-function variants in the STAG3 gene leading to primary ovarian insufficiency.</title>
        <authorList>
            <person name="Franca M.M."/>
            <person name="Nishi M.Y."/>
            <person name="Funari M.F.A."/>
            <person name="Lerario A.M."/>
            <person name="Baracat E.C."/>
            <person name="Hayashida S.A.Y."/>
            <person name="Maciel G.A.R."/>
            <person name="Jorge A.A.L."/>
            <person name="Mendonca B.B."/>
        </authorList>
    </citation>
    <scope>VARIANT POF8 650-TYR--PHE-1225 DEL</scope>
</reference>
<reference key="12">
    <citation type="journal article" date="2020" name="Genet. Med.">
        <title>Genetic dissection of spermatogenic arrest through exome analysis: clinical implications for the management of azoospermic men.</title>
        <authorList>
            <person name="Krausz C."/>
            <person name="Riera-Escamilla A."/>
            <person name="Moreno-Mendoza D."/>
            <person name="Holleman K."/>
            <person name="Cioppi F."/>
            <person name="Algaba F."/>
            <person name="Pybus M."/>
            <person name="Friedrich C."/>
            <person name="Wyrwoll M.J."/>
            <person name="Casamonti E."/>
            <person name="Pietroforte S."/>
            <person name="Nagirnaja L."/>
            <person name="Lopes A.M."/>
            <person name="Kliesch S."/>
            <person name="Pilatz A."/>
            <person name="Carrell D.T."/>
            <person name="Conrad D.F."/>
            <person name="Ars E."/>
            <person name="Ruiz-Castane E."/>
            <person name="Aston K.I."/>
            <person name="Baarends W.M."/>
            <person name="Tuettelmann F."/>
        </authorList>
    </citation>
    <scope>INVOLVEMENT IN SPGF61</scope>
</reference>
<reference key="13">
    <citation type="journal article" date="2020" name="Mol. Hum. Reprod.">
        <title>STAG3 homozygous missense variant causes primary ovarian insufficiency and male non-obstructive azoospermia.</title>
        <authorList>
            <person name="Jaillard S."/>
            <person name="McElreavy K."/>
            <person name="Robevska G."/>
            <person name="Akloul L."/>
            <person name="Ghieh F."/>
            <person name="Sreenivasan R."/>
            <person name="Beaumont M."/>
            <person name="Bashamboo A."/>
            <person name="Bignon-Topalovic J."/>
            <person name="Neyroud A.S."/>
            <person name="Bell K."/>
            <person name="Veron-Gastard E."/>
            <person name="Launay E."/>
            <person name="van den Bergen J."/>
            <person name="Nouyou B."/>
            <person name="Vialard F."/>
            <person name="Belaud-Rotureau M.A."/>
            <person name="Ayers K.L."/>
            <person name="Odent S."/>
            <person name="Ravel C."/>
            <person name="Tucker E.J."/>
            <person name="Sinclair A.H."/>
        </authorList>
    </citation>
    <scope>VARIANT POF8 HIS-321</scope>
    <scope>VARIANT SPGF61 HIS-321</scope>
</reference>
<reference key="14">
    <citation type="journal article" date="2022" name="Eur. J. Hum. Genet.">
        <title>Meiotic genes in premature ovarian insufficiency: variants in HROB and REC8 as likely genetic causes.</title>
        <authorList>
            <person name="Tucker E.J."/>
            <person name="Bell K.M."/>
            <person name="Robevska G."/>
            <person name="van den Bergen J."/>
            <person name="Ayers K.L."/>
            <person name="Listyasari N."/>
            <person name="Faradz S.M."/>
            <person name="Dulon J."/>
            <person name="Bakhshalizadeh S."/>
            <person name="Sreenivasan R."/>
            <person name="Nouyou B."/>
            <person name="Carre W."/>
            <person name="Akloul L."/>
            <person name="Duros S."/>
            <person name="Domin-Bernhard M."/>
            <person name="Belaud-Rotureau M.A."/>
            <person name="Touraine P."/>
            <person name="Jaillard S."/>
            <person name="Sinclair A.H."/>
        </authorList>
    </citation>
    <scope>VARIANT POF8 GLU-876</scope>
</reference>
<dbReference type="EMBL" id="AJ007798">
    <property type="protein sequence ID" value="CAB59367.1"/>
    <property type="molecule type" value="mRNA"/>
</dbReference>
<dbReference type="EMBL" id="AL833816">
    <property type="protein sequence ID" value="CAD38679.2"/>
    <property type="molecule type" value="mRNA"/>
</dbReference>
<dbReference type="EMBL" id="AK302693">
    <property type="protein sequence ID" value="BAG63922.1"/>
    <property type="molecule type" value="mRNA"/>
</dbReference>
<dbReference type="EMBL" id="AC005071">
    <property type="status" value="NOT_ANNOTATED_CDS"/>
    <property type="molecule type" value="Genomic_DNA"/>
</dbReference>
<dbReference type="EMBL" id="AC073842">
    <property type="status" value="NOT_ANNOTATED_CDS"/>
    <property type="molecule type" value="Genomic_DNA"/>
</dbReference>
<dbReference type="EMBL" id="CH471091">
    <property type="protein sequence ID" value="EAW76568.1"/>
    <property type="molecule type" value="Genomic_DNA"/>
</dbReference>
<dbReference type="EMBL" id="CH471091">
    <property type="protein sequence ID" value="EAW76570.1"/>
    <property type="molecule type" value="Genomic_DNA"/>
</dbReference>
<dbReference type="EMBL" id="BC146806">
    <property type="protein sequence ID" value="AAI46807.1"/>
    <property type="molecule type" value="mRNA"/>
</dbReference>
<dbReference type="CCDS" id="CCDS34703.1">
    <molecule id="Q9UJ98-1"/>
</dbReference>
<dbReference type="CCDS" id="CCDS64730.1">
    <molecule id="Q9UJ98-3"/>
</dbReference>
<dbReference type="RefSeq" id="NP_001269645.1">
    <molecule id="Q9UJ98-1"/>
    <property type="nucleotide sequence ID" value="NM_001282716.1"/>
</dbReference>
<dbReference type="RefSeq" id="NP_001269646.1">
    <property type="nucleotide sequence ID" value="NM_001282717.1"/>
</dbReference>
<dbReference type="RefSeq" id="NP_001269647.1">
    <molecule id="Q9UJ98-3"/>
    <property type="nucleotide sequence ID" value="NM_001282718.2"/>
</dbReference>
<dbReference type="RefSeq" id="NP_036579.2">
    <molecule id="Q9UJ98-1"/>
    <property type="nucleotide sequence ID" value="NM_012447.4"/>
</dbReference>
<dbReference type="RefSeq" id="XP_047275746.1">
    <molecule id="Q9UJ98-1"/>
    <property type="nucleotide sequence ID" value="XM_047419790.1"/>
</dbReference>
<dbReference type="RefSeq" id="XP_047275747.1">
    <molecule id="Q9UJ98-1"/>
    <property type="nucleotide sequence ID" value="XM_047419791.1"/>
</dbReference>
<dbReference type="RefSeq" id="XP_047275751.1">
    <molecule id="Q9UJ98-3"/>
    <property type="nucleotide sequence ID" value="XM_047419795.1"/>
</dbReference>
<dbReference type="RefSeq" id="XP_047275752.1">
    <molecule id="Q9UJ98-3"/>
    <property type="nucleotide sequence ID" value="XM_047419796.1"/>
</dbReference>
<dbReference type="RefSeq" id="XP_054213089.1">
    <molecule id="Q9UJ98-1"/>
    <property type="nucleotide sequence ID" value="XM_054357114.1"/>
</dbReference>
<dbReference type="RefSeq" id="XP_054213090.1">
    <molecule id="Q9UJ98-1"/>
    <property type="nucleotide sequence ID" value="XM_054357115.1"/>
</dbReference>
<dbReference type="RefSeq" id="XP_054213095.1">
    <molecule id="Q9UJ98-3"/>
    <property type="nucleotide sequence ID" value="XM_054357120.1"/>
</dbReference>
<dbReference type="RefSeq" id="XP_054213096.1">
    <molecule id="Q9UJ98-3"/>
    <property type="nucleotide sequence ID" value="XM_054357121.1"/>
</dbReference>
<dbReference type="SMR" id="Q9UJ98"/>
<dbReference type="BioGRID" id="115957">
    <property type="interactions" value="16"/>
</dbReference>
<dbReference type="ComplexPortal" id="CPX-6082">
    <property type="entry name" value="Nuclear meiotic cohesin complex, RAD21 variant"/>
</dbReference>
<dbReference type="ComplexPortal" id="CPX-7441">
    <property type="entry name" value="Nuclear meiotic cohesin complex, RAD21L1 variant"/>
</dbReference>
<dbReference type="ComplexPortal" id="CPX-7442">
    <property type="entry name" value="Nuclear meiotic cohesin complex, REC8 variant"/>
</dbReference>
<dbReference type="FunCoup" id="Q9UJ98">
    <property type="interactions" value="1338"/>
</dbReference>
<dbReference type="IntAct" id="Q9UJ98">
    <property type="interactions" value="2"/>
</dbReference>
<dbReference type="STRING" id="9606.ENSP00000477973"/>
<dbReference type="GlyGen" id="Q9UJ98">
    <property type="glycosylation" value="2 sites, 1 O-linked glycan (1 site)"/>
</dbReference>
<dbReference type="iPTMnet" id="Q9UJ98"/>
<dbReference type="PhosphoSitePlus" id="Q9UJ98"/>
<dbReference type="BioMuta" id="STAG3"/>
<dbReference type="DMDM" id="68847235"/>
<dbReference type="jPOST" id="Q9UJ98"/>
<dbReference type="MassIVE" id="Q9UJ98"/>
<dbReference type="PaxDb" id="9606-ENSP00000477973"/>
<dbReference type="PeptideAtlas" id="Q9UJ98"/>
<dbReference type="ProteomicsDB" id="43653"/>
<dbReference type="ProteomicsDB" id="84605">
    <molecule id="Q9UJ98-1"/>
</dbReference>
<dbReference type="ProteomicsDB" id="84606">
    <molecule id="Q9UJ98-2"/>
</dbReference>
<dbReference type="Antibodypedia" id="30623">
    <property type="antibodies" value="158 antibodies from 28 providers"/>
</dbReference>
<dbReference type="DNASU" id="10734"/>
<dbReference type="Ensembl" id="ENST00000317296.9">
    <molecule id="Q9UJ98-1"/>
    <property type="protein sequence ID" value="ENSP00000319318.5"/>
    <property type="gene ID" value="ENSG00000066923.19"/>
</dbReference>
<dbReference type="Ensembl" id="ENST00000394018.6">
    <molecule id="Q9UJ98-3"/>
    <property type="protein sequence ID" value="ENSP00000377586.2"/>
    <property type="gene ID" value="ENSG00000066923.19"/>
</dbReference>
<dbReference type="Ensembl" id="ENST00000426455.5">
    <molecule id="Q9UJ98-1"/>
    <property type="protein sequence ID" value="ENSP00000400359.1"/>
    <property type="gene ID" value="ENSG00000066923.19"/>
</dbReference>
<dbReference type="Ensembl" id="ENST00000620100.5">
    <molecule id="Q9UJ98-3"/>
    <property type="protein sequence ID" value="ENSP00000484098.1"/>
    <property type="gene ID" value="ENSG00000066923.19"/>
</dbReference>
<dbReference type="GeneID" id="10734"/>
<dbReference type="KEGG" id="hsa:10734"/>
<dbReference type="UCSC" id="uc003utx.3">
    <molecule id="Q9UJ98-1"/>
    <property type="organism name" value="human"/>
</dbReference>
<dbReference type="AGR" id="HGNC:11356"/>
<dbReference type="CTD" id="10734"/>
<dbReference type="DisGeNET" id="10734"/>
<dbReference type="GeneCards" id="STAG3"/>
<dbReference type="HGNC" id="HGNC:11356">
    <property type="gene designation" value="STAG3"/>
</dbReference>
<dbReference type="HPA" id="ENSG00000066923">
    <property type="expression patterns" value="Tissue enriched (testis)"/>
</dbReference>
<dbReference type="MalaCards" id="STAG3"/>
<dbReference type="MIM" id="608489">
    <property type="type" value="gene"/>
</dbReference>
<dbReference type="MIM" id="615723">
    <property type="type" value="phenotype"/>
</dbReference>
<dbReference type="MIM" id="619672">
    <property type="type" value="phenotype"/>
</dbReference>
<dbReference type="neXtProt" id="NX_Q9UJ98"/>
<dbReference type="OpenTargets" id="ENSG00000066923"/>
<dbReference type="Orphanet" id="399805">
    <property type="disease" value="Male infertility with azoospermia or oligozoospermia due to single gene mutation"/>
</dbReference>
<dbReference type="PharmGKB" id="PA36178"/>
<dbReference type="VEuPathDB" id="HostDB:ENSG00000066923"/>
<dbReference type="eggNOG" id="KOG2011">
    <property type="taxonomic scope" value="Eukaryota"/>
</dbReference>
<dbReference type="GeneTree" id="ENSGT00950000182972"/>
<dbReference type="InParanoid" id="Q9UJ98"/>
<dbReference type="OrthoDB" id="498590at2759"/>
<dbReference type="PAN-GO" id="Q9UJ98">
    <property type="GO annotations" value="5 GO annotations based on evolutionary models"/>
</dbReference>
<dbReference type="PhylomeDB" id="Q9UJ98"/>
<dbReference type="TreeFam" id="TF314604"/>
<dbReference type="PathwayCommons" id="Q9UJ98"/>
<dbReference type="Reactome" id="R-HSA-1221632">
    <property type="pathway name" value="Meiotic synapsis"/>
</dbReference>
<dbReference type="SignaLink" id="Q9UJ98"/>
<dbReference type="SIGNOR" id="Q9UJ98"/>
<dbReference type="BioGRID-ORCS" id="10734">
    <property type="hits" value="19 hits in 1160 CRISPR screens"/>
</dbReference>
<dbReference type="CD-CODE" id="91857CE7">
    <property type="entry name" value="Nucleolus"/>
</dbReference>
<dbReference type="ChiTaRS" id="STAG3">
    <property type="organism name" value="human"/>
</dbReference>
<dbReference type="GenomeRNAi" id="10734"/>
<dbReference type="Pharos" id="Q9UJ98">
    <property type="development level" value="Tbio"/>
</dbReference>
<dbReference type="PRO" id="PR:Q9UJ98"/>
<dbReference type="Proteomes" id="UP000005640">
    <property type="component" value="Chromosome 7"/>
</dbReference>
<dbReference type="RNAct" id="Q9UJ98">
    <property type="molecule type" value="protein"/>
</dbReference>
<dbReference type="Bgee" id="ENSG00000066923">
    <property type="expression patterns" value="Expressed in oocyte and 110 other cell types or tissues"/>
</dbReference>
<dbReference type="ExpressionAtlas" id="Q9UJ98">
    <property type="expression patterns" value="baseline and differential"/>
</dbReference>
<dbReference type="GO" id="GO:0000785">
    <property type="term" value="C:chromatin"/>
    <property type="evidence" value="ECO:0000318"/>
    <property type="project" value="GO_Central"/>
</dbReference>
<dbReference type="GO" id="GO:0000775">
    <property type="term" value="C:chromosome, centromeric region"/>
    <property type="evidence" value="ECO:0007669"/>
    <property type="project" value="UniProtKB-SubCell"/>
</dbReference>
<dbReference type="GO" id="GO:0005615">
    <property type="term" value="C:extracellular space"/>
    <property type="evidence" value="ECO:0007005"/>
    <property type="project" value="UniProtKB"/>
</dbReference>
<dbReference type="GO" id="GO:0030893">
    <property type="term" value="C:meiotic cohesin complex"/>
    <property type="evidence" value="ECO:0000314"/>
    <property type="project" value="UniProtKB"/>
</dbReference>
<dbReference type="GO" id="GO:0005730">
    <property type="term" value="C:nucleolus"/>
    <property type="evidence" value="ECO:0000314"/>
    <property type="project" value="HPA"/>
</dbReference>
<dbReference type="GO" id="GO:0005654">
    <property type="term" value="C:nucleoplasm"/>
    <property type="evidence" value="ECO:0000314"/>
    <property type="project" value="HPA"/>
</dbReference>
<dbReference type="GO" id="GO:0005634">
    <property type="term" value="C:nucleus"/>
    <property type="evidence" value="ECO:0000318"/>
    <property type="project" value="GO_Central"/>
</dbReference>
<dbReference type="GO" id="GO:0000795">
    <property type="term" value="C:synaptonemal complex"/>
    <property type="evidence" value="ECO:0000304"/>
    <property type="project" value="ProtInc"/>
</dbReference>
<dbReference type="GO" id="GO:0003682">
    <property type="term" value="F:chromatin binding"/>
    <property type="evidence" value="ECO:0000318"/>
    <property type="project" value="GO_Central"/>
</dbReference>
<dbReference type="GO" id="GO:0034089">
    <property type="term" value="P:establishment of meiotic sister chromatid cohesion"/>
    <property type="evidence" value="ECO:0000315"/>
    <property type="project" value="UniProtKB"/>
</dbReference>
<dbReference type="GO" id="GO:0007062">
    <property type="term" value="P:sister chromatid cohesion"/>
    <property type="evidence" value="ECO:0000318"/>
    <property type="project" value="GO_Central"/>
</dbReference>
<dbReference type="GO" id="GO:0007130">
    <property type="term" value="P:synaptonemal complex assembly"/>
    <property type="evidence" value="ECO:0000304"/>
    <property type="project" value="ProtInc"/>
</dbReference>
<dbReference type="FunFam" id="1.25.10.10:FF:000449">
    <property type="entry name" value="Cohesin subunit SA-3"/>
    <property type="match status" value="1"/>
</dbReference>
<dbReference type="InterPro" id="IPR016024">
    <property type="entry name" value="ARM-type_fold"/>
</dbReference>
<dbReference type="InterPro" id="IPR039662">
    <property type="entry name" value="Cohesin_Scc3/SA"/>
</dbReference>
<dbReference type="InterPro" id="IPR056396">
    <property type="entry name" value="HEAT_SCC3-SA"/>
</dbReference>
<dbReference type="InterPro" id="IPR020839">
    <property type="entry name" value="SCD"/>
</dbReference>
<dbReference type="InterPro" id="IPR013721">
    <property type="entry name" value="STAG"/>
</dbReference>
<dbReference type="PANTHER" id="PTHR11199:SF8">
    <property type="entry name" value="COHESIN SUBUNIT SA-3"/>
    <property type="match status" value="1"/>
</dbReference>
<dbReference type="PANTHER" id="PTHR11199">
    <property type="entry name" value="STROMAL ANTIGEN"/>
    <property type="match status" value="1"/>
</dbReference>
<dbReference type="Pfam" id="PF24571">
    <property type="entry name" value="HEAT_SCC3-SA"/>
    <property type="match status" value="1"/>
</dbReference>
<dbReference type="Pfam" id="PF21581">
    <property type="entry name" value="SCD"/>
    <property type="match status" value="1"/>
</dbReference>
<dbReference type="Pfam" id="PF08514">
    <property type="entry name" value="STAG"/>
    <property type="match status" value="1"/>
</dbReference>
<dbReference type="SUPFAM" id="SSF48371">
    <property type="entry name" value="ARM repeat"/>
    <property type="match status" value="1"/>
</dbReference>
<dbReference type="PROSITE" id="PS51425">
    <property type="entry name" value="SCD"/>
    <property type="match status" value="1"/>
</dbReference>
<proteinExistence type="evidence at protein level"/>
<name>STAG3_HUMAN</name>
<comment type="function">
    <text evidence="8">Meiosis specific component of cohesin complex. The cohesin complex is required for the cohesion of sister chromatids after DNA replication. The cohesin complex apparently forms a large proteinaceous ring within which sister chromatids can be trapped. At anaphase, the complex is cleaved and dissociates from chromatin, allowing sister chromatids to segregate. The meiosis-specific cohesin complex probably replaces mitosis specific cohesin complex when it dissociates from chromatin during prophase I.</text>
</comment>
<comment type="subunit">
    <text evidence="1">Component of the meiosis-specific cohesin complex, which also contains the SMC1 (SMC1A or SMC1B) and SMC3 heterodimer. Such complex likely contains RAD21, or the meiosis-specific related protein REC8. Interacts with CCDC79/TERB1; recruiting cohesin to telomeres to develop structural rigidity (By similarity).</text>
</comment>
<comment type="subcellular location">
    <subcellularLocation>
        <location evidence="3 5">Nucleus</location>
    </subcellularLocation>
    <subcellularLocation>
        <location evidence="5">Chromosome</location>
    </subcellularLocation>
    <subcellularLocation>
        <location evidence="5">Chromosome</location>
        <location evidence="5">Centromere</location>
    </subcellularLocation>
    <text evidence="5">Associates with chromatin. In prophase I stage of meiosis, it is found along the axial elements of synaptonemal complexes. In late-pachytene-diplotene, the bulk of protein dissociates from the chromosome arms probably because of phosphorylation by PLK1, except at centromeres, where cohesin complexes remain. It however remains chromatin associated at the centromeres up to metaphase I. During anaphase I, it probably dissociates from centromeres, allowing chromosomes segregation.</text>
</comment>
<comment type="alternative products">
    <event type="alternative splicing"/>
    <isoform>
        <id>Q9UJ98-1</id>
        <name>1</name>
        <sequence type="displayed"/>
    </isoform>
    <isoform>
        <id>Q9UJ98-2</id>
        <name>2</name>
        <sequence type="described" ref="VSP_006996 VSP_006997"/>
    </isoform>
    <isoform>
        <id>Q9UJ98-3</id>
        <name>3</name>
        <sequence type="described" ref="VSP_054742"/>
    </isoform>
</comment>
<comment type="tissue specificity">
    <text>Testis specific.</text>
</comment>
<comment type="PTM">
    <text evidence="1">Phosphorylated.</text>
</comment>
<comment type="disease" evidence="6 7 9 11 14">
    <disease id="DI-04093">
        <name>Premature ovarian failure 8</name>
        <acronym>POF8</acronym>
        <description>An ovarian disorder defined as the cessation of ovarian function under the age of 40 years. It is characterized by oligomenorrhea or amenorrhea, in the presence of elevated levels of serum gonadotropins and low estradiol.</description>
        <dbReference type="MIM" id="615723"/>
    </disease>
    <text evidence="6">The disease is caused by variants affecting the gene represented in this entry. A homozygous deletion in STAG3 predicted to result in frameshift and premature truncation, has been shown to be the cause of premature ovarian failure in a large consanguineous family.</text>
</comment>
<comment type="disease" evidence="8 9 10">
    <disease id="DI-06206">
        <name>Spermatogenic failure 61</name>
        <acronym>SPGF61</acronym>
        <description>An autosomal recessive male infertility disorder characterized by non-obstructive azoospermia, due to complete meiotic arrest at the primary spermatocyte stage.</description>
        <dbReference type="MIM" id="619672"/>
    </disease>
    <text>The disease is caused by variants affecting the gene represented in this entry.</text>
</comment>
<comment type="similarity">
    <text evidence="15">Belongs to the SCC3 family.</text>
</comment>
<keyword id="KW-0025">Alternative splicing</keyword>
<keyword id="KW-0131">Cell cycle</keyword>
<keyword id="KW-0137">Centromere</keyword>
<keyword id="KW-0158">Chromosome</keyword>
<keyword id="KW-0159">Chromosome partition</keyword>
<keyword id="KW-0225">Disease variant</keyword>
<keyword id="KW-0469">Meiosis</keyword>
<keyword id="KW-0539">Nucleus</keyword>
<keyword id="KW-0597">Phosphoprotein</keyword>
<keyword id="KW-1066">Premature ovarian failure</keyword>
<keyword id="KW-1267">Proteomics identification</keyword>
<keyword id="KW-1185">Reference proteome</keyword>
<protein>
    <recommendedName>
        <fullName>Cohesin subunit SA-3</fullName>
    </recommendedName>
    <alternativeName>
        <fullName>SCC3 homolog 3</fullName>
    </alternativeName>
    <alternativeName>
        <fullName>Stromal antigen 3</fullName>
    </alternativeName>
    <alternativeName>
        <fullName>Stromalin-3</fullName>
    </alternativeName>
</protein>
<gene>
    <name type="primary">STAG3</name>
</gene>
<evidence type="ECO:0000250" key="1"/>
<evidence type="ECO:0000250" key="2">
    <source>
        <dbReference type="UniProtKB" id="O70576"/>
    </source>
</evidence>
<evidence type="ECO:0000255" key="3">
    <source>
        <dbReference type="PROSITE-ProRule" id="PRU00750"/>
    </source>
</evidence>
<evidence type="ECO:0000256" key="4">
    <source>
        <dbReference type="SAM" id="MobiDB-lite"/>
    </source>
</evidence>
<evidence type="ECO:0000269" key="5">
    <source>
    </source>
</evidence>
<evidence type="ECO:0000269" key="6">
    <source>
    </source>
</evidence>
<evidence type="ECO:0000269" key="7">
    <source>
    </source>
</evidence>
<evidence type="ECO:0000269" key="8">
    <source>
    </source>
</evidence>
<evidence type="ECO:0000269" key="9">
    <source>
    </source>
</evidence>
<evidence type="ECO:0000269" key="10">
    <source>
    </source>
</evidence>
<evidence type="ECO:0000269" key="11">
    <source>
    </source>
</evidence>
<evidence type="ECO:0000303" key="12">
    <source>
    </source>
</evidence>
<evidence type="ECO:0000303" key="13">
    <source>
    </source>
</evidence>
<evidence type="ECO:0000303" key="14">
    <source>
    </source>
</evidence>
<evidence type="ECO:0000305" key="15"/>